<name>Y2181_BURO1</name>
<accession>Q1BTH3</accession>
<gene>
    <name type="ordered locus">Bcen_2181</name>
</gene>
<protein>
    <recommendedName>
        <fullName evidence="1">Nucleotide-binding protein Bcen_2181</fullName>
    </recommendedName>
</protein>
<dbReference type="EMBL" id="CP000378">
    <property type="protein sequence ID" value="ABF77082.1"/>
    <property type="molecule type" value="Genomic_DNA"/>
</dbReference>
<dbReference type="SMR" id="Q1BTH3"/>
<dbReference type="HOGENOM" id="CLU_059558_1_1_4"/>
<dbReference type="GO" id="GO:0005524">
    <property type="term" value="F:ATP binding"/>
    <property type="evidence" value="ECO:0007669"/>
    <property type="project" value="UniProtKB-UniRule"/>
</dbReference>
<dbReference type="GO" id="GO:0005525">
    <property type="term" value="F:GTP binding"/>
    <property type="evidence" value="ECO:0007669"/>
    <property type="project" value="UniProtKB-UniRule"/>
</dbReference>
<dbReference type="Gene3D" id="3.40.50.300">
    <property type="entry name" value="P-loop containing nucleotide triphosphate hydrolases"/>
    <property type="match status" value="1"/>
</dbReference>
<dbReference type="HAMAP" id="MF_00636">
    <property type="entry name" value="RapZ_like"/>
    <property type="match status" value="1"/>
</dbReference>
<dbReference type="InterPro" id="IPR027417">
    <property type="entry name" value="P-loop_NTPase"/>
</dbReference>
<dbReference type="InterPro" id="IPR005337">
    <property type="entry name" value="RapZ-like"/>
</dbReference>
<dbReference type="InterPro" id="IPR053930">
    <property type="entry name" value="RapZ-like_N"/>
</dbReference>
<dbReference type="InterPro" id="IPR053931">
    <property type="entry name" value="RapZ_C"/>
</dbReference>
<dbReference type="NCBIfam" id="NF003828">
    <property type="entry name" value="PRK05416.1"/>
    <property type="match status" value="1"/>
</dbReference>
<dbReference type="PANTHER" id="PTHR30448">
    <property type="entry name" value="RNASE ADAPTER PROTEIN RAPZ"/>
    <property type="match status" value="1"/>
</dbReference>
<dbReference type="PANTHER" id="PTHR30448:SF0">
    <property type="entry name" value="RNASE ADAPTER PROTEIN RAPZ"/>
    <property type="match status" value="1"/>
</dbReference>
<dbReference type="Pfam" id="PF22740">
    <property type="entry name" value="PapZ_C"/>
    <property type="match status" value="1"/>
</dbReference>
<dbReference type="Pfam" id="PF03668">
    <property type="entry name" value="RapZ-like_N"/>
    <property type="match status" value="1"/>
</dbReference>
<dbReference type="PIRSF" id="PIRSF005052">
    <property type="entry name" value="P-loopkin"/>
    <property type="match status" value="1"/>
</dbReference>
<dbReference type="SUPFAM" id="SSF52540">
    <property type="entry name" value="P-loop containing nucleoside triphosphate hydrolases"/>
    <property type="match status" value="1"/>
</dbReference>
<reference key="1">
    <citation type="submission" date="2006-05" db="EMBL/GenBank/DDBJ databases">
        <title>Complete sequence of chromosome 1 of Burkholderia cenocepacia AU 1054.</title>
        <authorList>
            <consortium name="US DOE Joint Genome Institute"/>
            <person name="Copeland A."/>
            <person name="Lucas S."/>
            <person name="Lapidus A."/>
            <person name="Barry K."/>
            <person name="Detter J.C."/>
            <person name="Glavina del Rio T."/>
            <person name="Hammon N."/>
            <person name="Israni S."/>
            <person name="Dalin E."/>
            <person name="Tice H."/>
            <person name="Pitluck S."/>
            <person name="Chain P."/>
            <person name="Malfatti S."/>
            <person name="Shin M."/>
            <person name="Vergez L."/>
            <person name="Schmutz J."/>
            <person name="Larimer F."/>
            <person name="Land M."/>
            <person name="Hauser L."/>
            <person name="Kyrpides N."/>
            <person name="Lykidis A."/>
            <person name="LiPuma J.J."/>
            <person name="Konstantinidis K."/>
            <person name="Tiedje J.M."/>
            <person name="Richardson P."/>
        </authorList>
    </citation>
    <scope>NUCLEOTIDE SEQUENCE [LARGE SCALE GENOMIC DNA]</scope>
    <source>
        <strain>AU 1054</strain>
    </source>
</reference>
<comment type="function">
    <text evidence="1">Displays ATPase and GTPase activities.</text>
</comment>
<comment type="similarity">
    <text evidence="1">Belongs to the RapZ-like family.</text>
</comment>
<feature type="chain" id="PRO_0000258946" description="Nucleotide-binding protein Bcen_2181">
    <location>
        <begin position="1"/>
        <end position="302"/>
    </location>
</feature>
<feature type="binding site" evidence="1">
    <location>
        <begin position="8"/>
        <end position="15"/>
    </location>
    <ligand>
        <name>ATP</name>
        <dbReference type="ChEBI" id="CHEBI:30616"/>
    </ligand>
</feature>
<feature type="binding site" evidence="1">
    <location>
        <begin position="57"/>
        <end position="60"/>
    </location>
    <ligand>
        <name>GTP</name>
        <dbReference type="ChEBI" id="CHEBI:37565"/>
    </ligand>
</feature>
<proteinExistence type="inferred from homology"/>
<sequence length="302" mass="33909">MRIVLITGISGSGKSVALNALEDAGYYCVDNLPPHVLPELARYLAQDGQRRLAVAIDARSSASLDEMPGLIRELSREHDVRVLFLNASTQALIQRFSETRRRHPLSGSRSHDADVGLLSSLEEAIERERELVAPLAEFGHQIDTSTLRANALRTWVKRFIEQKNNDLMVMFESFGFKRGVPLDADLMFDVRALPNPYYDHQLRPLTGLDQPVIAFLDALPIVHQMIDDIHAFLMKWLPHFRDDNRSYLTVAIGCTGGQHRSVFIAETLAARLARDANVIVRHRDAPVDVDASSRLVSEVDRP</sequence>
<keyword id="KW-0067">ATP-binding</keyword>
<keyword id="KW-0342">GTP-binding</keyword>
<keyword id="KW-0547">Nucleotide-binding</keyword>
<organism>
    <name type="scientific">Burkholderia orbicola (strain AU 1054)</name>
    <dbReference type="NCBI Taxonomy" id="331271"/>
    <lineage>
        <taxon>Bacteria</taxon>
        <taxon>Pseudomonadati</taxon>
        <taxon>Pseudomonadota</taxon>
        <taxon>Betaproteobacteria</taxon>
        <taxon>Burkholderiales</taxon>
        <taxon>Burkholderiaceae</taxon>
        <taxon>Burkholderia</taxon>
        <taxon>Burkholderia cepacia complex</taxon>
        <taxon>Burkholderia orbicola</taxon>
    </lineage>
</organism>
<evidence type="ECO:0000255" key="1">
    <source>
        <dbReference type="HAMAP-Rule" id="MF_00636"/>
    </source>
</evidence>